<evidence type="ECO:0000250" key="1"/>
<evidence type="ECO:0000255" key="2"/>
<evidence type="ECO:0000305" key="3"/>
<name>RECN_RICCN</name>
<reference key="1">
    <citation type="journal article" date="2001" name="Science">
        <title>Mechanisms of evolution in Rickettsia conorii and R. prowazekii.</title>
        <authorList>
            <person name="Ogata H."/>
            <person name="Audic S."/>
            <person name="Renesto-Audiffren P."/>
            <person name="Fournier P.-E."/>
            <person name="Barbe V."/>
            <person name="Samson D."/>
            <person name="Roux V."/>
            <person name="Cossart P."/>
            <person name="Weissenbach J."/>
            <person name="Claverie J.-M."/>
            <person name="Raoult D."/>
        </authorList>
    </citation>
    <scope>NUCLEOTIDE SEQUENCE [LARGE SCALE GENOMIC DNA]</scope>
    <source>
        <strain>ATCC VR-613 / Malish 7</strain>
    </source>
</reference>
<dbReference type="EMBL" id="AE006914">
    <property type="protein sequence ID" value="AAL02767.1"/>
    <property type="molecule type" value="Genomic_DNA"/>
</dbReference>
<dbReference type="PIR" id="E97728">
    <property type="entry name" value="E97728"/>
</dbReference>
<dbReference type="RefSeq" id="WP_010976893.1">
    <property type="nucleotide sequence ID" value="NC_003103.1"/>
</dbReference>
<dbReference type="SMR" id="Q92J40"/>
<dbReference type="GeneID" id="927962"/>
<dbReference type="KEGG" id="rco:RC0229"/>
<dbReference type="PATRIC" id="fig|272944.4.peg.264"/>
<dbReference type="HOGENOM" id="CLU_018297_3_1_5"/>
<dbReference type="Proteomes" id="UP000000816">
    <property type="component" value="Chromosome"/>
</dbReference>
<dbReference type="GO" id="GO:0043590">
    <property type="term" value="C:bacterial nucleoid"/>
    <property type="evidence" value="ECO:0007669"/>
    <property type="project" value="TreeGrafter"/>
</dbReference>
<dbReference type="GO" id="GO:0005524">
    <property type="term" value="F:ATP binding"/>
    <property type="evidence" value="ECO:0007669"/>
    <property type="project" value="UniProtKB-KW"/>
</dbReference>
<dbReference type="GO" id="GO:0006310">
    <property type="term" value="P:DNA recombination"/>
    <property type="evidence" value="ECO:0007669"/>
    <property type="project" value="InterPro"/>
</dbReference>
<dbReference type="GO" id="GO:0006281">
    <property type="term" value="P:DNA repair"/>
    <property type="evidence" value="ECO:0007669"/>
    <property type="project" value="UniProtKB-KW"/>
</dbReference>
<dbReference type="GO" id="GO:0009432">
    <property type="term" value="P:SOS response"/>
    <property type="evidence" value="ECO:0007669"/>
    <property type="project" value="TreeGrafter"/>
</dbReference>
<dbReference type="CDD" id="cd03241">
    <property type="entry name" value="ABC_RecN"/>
    <property type="match status" value="2"/>
</dbReference>
<dbReference type="Gene3D" id="3.40.50.300">
    <property type="entry name" value="P-loop containing nucleotide triphosphate hydrolases"/>
    <property type="match status" value="2"/>
</dbReference>
<dbReference type="InterPro" id="IPR004604">
    <property type="entry name" value="DNA_recomb/repair_RecN"/>
</dbReference>
<dbReference type="InterPro" id="IPR027417">
    <property type="entry name" value="P-loop_NTPase"/>
</dbReference>
<dbReference type="InterPro" id="IPR003395">
    <property type="entry name" value="RecF/RecN/SMC_N"/>
</dbReference>
<dbReference type="NCBIfam" id="TIGR00634">
    <property type="entry name" value="recN"/>
    <property type="match status" value="1"/>
</dbReference>
<dbReference type="PANTHER" id="PTHR11059">
    <property type="entry name" value="DNA REPAIR PROTEIN RECN"/>
    <property type="match status" value="1"/>
</dbReference>
<dbReference type="PANTHER" id="PTHR11059:SF0">
    <property type="entry name" value="DNA REPAIR PROTEIN RECN"/>
    <property type="match status" value="1"/>
</dbReference>
<dbReference type="Pfam" id="PF02463">
    <property type="entry name" value="SMC_N"/>
    <property type="match status" value="1"/>
</dbReference>
<dbReference type="PIRSF" id="PIRSF003128">
    <property type="entry name" value="RecN"/>
    <property type="match status" value="1"/>
</dbReference>
<dbReference type="SUPFAM" id="SSF52540">
    <property type="entry name" value="P-loop containing nucleoside triphosphate hydrolases"/>
    <property type="match status" value="2"/>
</dbReference>
<organism>
    <name type="scientific">Rickettsia conorii (strain ATCC VR-613 / Malish 7)</name>
    <dbReference type="NCBI Taxonomy" id="272944"/>
    <lineage>
        <taxon>Bacteria</taxon>
        <taxon>Pseudomonadati</taxon>
        <taxon>Pseudomonadota</taxon>
        <taxon>Alphaproteobacteria</taxon>
        <taxon>Rickettsiales</taxon>
        <taxon>Rickettsiaceae</taxon>
        <taxon>Rickettsieae</taxon>
        <taxon>Rickettsia</taxon>
        <taxon>spotted fever group</taxon>
    </lineage>
</organism>
<proteinExistence type="inferred from homology"/>
<accession>Q92J40</accession>
<protein>
    <recommendedName>
        <fullName>DNA repair protein RecN</fullName>
    </recommendedName>
    <alternativeName>
        <fullName>Recombination protein N</fullName>
    </alternativeName>
</protein>
<gene>
    <name type="primary">recN</name>
    <name type="ordered locus">RC0229</name>
</gene>
<comment type="function">
    <text evidence="1">May be involved in recombinational repair of damaged DNA.</text>
</comment>
<comment type="similarity">
    <text evidence="3">Belongs to the RecN family.</text>
</comment>
<keyword id="KW-0067">ATP-binding</keyword>
<keyword id="KW-0227">DNA damage</keyword>
<keyword id="KW-0234">DNA repair</keyword>
<keyword id="KW-0547">Nucleotide-binding</keyword>
<feature type="chain" id="PRO_0000188024" description="DNA repair protein RecN">
    <location>
        <begin position="1"/>
        <end position="545"/>
    </location>
</feature>
<feature type="binding site" evidence="2">
    <location>
        <begin position="29"/>
        <end position="36"/>
    </location>
    <ligand>
        <name>ATP</name>
        <dbReference type="ChEBI" id="CHEBI:30616"/>
    </ligand>
</feature>
<sequence length="545" mass="61730">MFYSLSVKNFILIDELEIEFNKGLCVITGETGAGKSILLDAILFCLGYKTSNNIIKRGKDYAVVNIIFSLNEEIKNFLVQNFIEPEELLFVKCLQKAEGRKNFFINNQVVTKALMQQLATYLFELHGQNNNISLLEANTQRDILDSYGNLLDFRAELSKCYQAWQNTRKEMAEITLKQNSIEQEIDYLSFATEELTKLNIQTGEEEKLANLRKDLQNKDKDLQLIKDIIEQINNPEINTSINRAEKLLARQGNNERFEAIVTSLEEAYNNLEEARQELSNLLDSFNYEEYNLEETEERLFLIKAISRKYNVPADALGVFLDKSLEQLSILKNKIANSNELKAQEVLLQKKYYELASNLSAKRLIVAKHLEESLHQELKQLKMAKAIFEIEINTKEPTADGNDDIVFKASTNPGTAAAAINKIASGGELSRFMLALKTALFDKMVKPSIIFDEIDVGISGEVADKVGERLKKLSSVTQVIVITHQPQVAGKADLHIKIEKTQLEKETKVTVKALNLAERQEELARMISGKTITKASLKAAKELLHL</sequence>